<proteinExistence type="inferred from homology"/>
<name>ATPB_CHLT3</name>
<reference key="1">
    <citation type="submission" date="2008-06" db="EMBL/GenBank/DDBJ databases">
        <title>Complete sequence of Chloroherpeton thalassium ATCC 35110.</title>
        <authorList>
            <consortium name="US DOE Joint Genome Institute"/>
            <person name="Lucas S."/>
            <person name="Copeland A."/>
            <person name="Lapidus A."/>
            <person name="Glavina del Rio T."/>
            <person name="Dalin E."/>
            <person name="Tice H."/>
            <person name="Bruce D."/>
            <person name="Goodwin L."/>
            <person name="Pitluck S."/>
            <person name="Schmutz J."/>
            <person name="Larimer F."/>
            <person name="Land M."/>
            <person name="Hauser L."/>
            <person name="Kyrpides N."/>
            <person name="Mikhailova N."/>
            <person name="Liu Z."/>
            <person name="Li T."/>
            <person name="Zhao F."/>
            <person name="Overmann J."/>
            <person name="Bryant D.A."/>
            <person name="Richardson P."/>
        </authorList>
    </citation>
    <scope>NUCLEOTIDE SEQUENCE [LARGE SCALE GENOMIC DNA]</scope>
    <source>
        <strain>ATCC 35110 / GB-78</strain>
    </source>
</reference>
<keyword id="KW-0066">ATP synthesis</keyword>
<keyword id="KW-0067">ATP-binding</keyword>
<keyword id="KW-0997">Cell inner membrane</keyword>
<keyword id="KW-1003">Cell membrane</keyword>
<keyword id="KW-0139">CF(1)</keyword>
<keyword id="KW-0375">Hydrogen ion transport</keyword>
<keyword id="KW-0406">Ion transport</keyword>
<keyword id="KW-0472">Membrane</keyword>
<keyword id="KW-0547">Nucleotide-binding</keyword>
<keyword id="KW-1185">Reference proteome</keyword>
<keyword id="KW-1278">Translocase</keyword>
<keyword id="KW-0813">Transport</keyword>
<sequence>MHEGKITQIIGPVVDVDFVDGQLPSIMDALIVERPDGTELVLETQQHLGEERVRTIAMEATEGLVRGMKVVNTKNPIQTPVGENVLGRMLNVVGKPIDGLGEVHATKTYSIHRPSPAFDELSTKAEMFETGIKVIDLLEPYSRGGKTGLFGGAGVGKTVLIMELINNIAKQQSGYSVFAGVGERTREGNDLWEEMKESGVIDKTALVFGQMNEPPGARARVALTALSIAEYFRDEENRDVLLFVDNIFRFTQAGSEVSALLGRMPSAVGYQPTLATEMGALQERIVSTKKGSITSVQAIYVPADDLTDPAPATTFTHLDATTVLSRSIAELGIYPAVDPLDSTSRILDPNIIGRDHYDTAQAVKQILQRYKDLQDIIAILGMDELSDEDKLLVARARKVQRFLSQPFFVAEQFTGLEGKYVRLEDTIKAFKEIIEGRHDSLPENAFYLVGTIEDAIKKAKQLQNA</sequence>
<protein>
    <recommendedName>
        <fullName evidence="1">ATP synthase subunit beta</fullName>
        <ecNumber evidence="1">7.1.2.2</ecNumber>
    </recommendedName>
    <alternativeName>
        <fullName evidence="1">ATP synthase F1 sector subunit beta</fullName>
    </alternativeName>
    <alternativeName>
        <fullName evidence="1">F-ATPase subunit beta</fullName>
    </alternativeName>
</protein>
<gene>
    <name evidence="1" type="primary">atpD</name>
    <name type="ordered locus">Ctha_0481</name>
</gene>
<organism>
    <name type="scientific">Chloroherpeton thalassium (strain ATCC 35110 / GB-78)</name>
    <dbReference type="NCBI Taxonomy" id="517418"/>
    <lineage>
        <taxon>Bacteria</taxon>
        <taxon>Pseudomonadati</taxon>
        <taxon>Chlorobiota</taxon>
        <taxon>Chlorobiia</taxon>
        <taxon>Chlorobiales</taxon>
        <taxon>Chloroherpetonaceae</taxon>
        <taxon>Chloroherpeton</taxon>
    </lineage>
</organism>
<accession>B3QUP6</accession>
<evidence type="ECO:0000255" key="1">
    <source>
        <dbReference type="HAMAP-Rule" id="MF_01347"/>
    </source>
</evidence>
<comment type="function">
    <text evidence="1">Produces ATP from ADP in the presence of a proton gradient across the membrane. The catalytic sites are hosted primarily by the beta subunits.</text>
</comment>
<comment type="catalytic activity">
    <reaction evidence="1">
        <text>ATP + H2O + 4 H(+)(in) = ADP + phosphate + 5 H(+)(out)</text>
        <dbReference type="Rhea" id="RHEA:57720"/>
        <dbReference type="ChEBI" id="CHEBI:15377"/>
        <dbReference type="ChEBI" id="CHEBI:15378"/>
        <dbReference type="ChEBI" id="CHEBI:30616"/>
        <dbReference type="ChEBI" id="CHEBI:43474"/>
        <dbReference type="ChEBI" id="CHEBI:456216"/>
        <dbReference type="EC" id="7.1.2.2"/>
    </reaction>
</comment>
<comment type="subunit">
    <text evidence="1">F-type ATPases have 2 components, CF(1) - the catalytic core - and CF(0) - the membrane proton channel. CF(1) has five subunits: alpha(3), beta(3), gamma(1), delta(1), epsilon(1). CF(0) has four main subunits: a(1), b(1), b'(1) and c(9-12).</text>
</comment>
<comment type="subcellular location">
    <subcellularLocation>
        <location evidence="1">Cell inner membrane</location>
        <topology evidence="1">Peripheral membrane protein</topology>
    </subcellularLocation>
</comment>
<comment type="similarity">
    <text evidence="1">Belongs to the ATPase alpha/beta chains family.</text>
</comment>
<feature type="chain" id="PRO_1000143486" description="ATP synthase subunit beta">
    <location>
        <begin position="1"/>
        <end position="465"/>
    </location>
</feature>
<feature type="binding site" evidence="1">
    <location>
        <begin position="151"/>
        <end position="158"/>
    </location>
    <ligand>
        <name>ATP</name>
        <dbReference type="ChEBI" id="CHEBI:30616"/>
    </ligand>
</feature>
<dbReference type="EC" id="7.1.2.2" evidence="1"/>
<dbReference type="EMBL" id="CP001100">
    <property type="protein sequence ID" value="ACF12952.1"/>
    <property type="molecule type" value="Genomic_DNA"/>
</dbReference>
<dbReference type="RefSeq" id="WP_012499036.1">
    <property type="nucleotide sequence ID" value="NC_011026.1"/>
</dbReference>
<dbReference type="SMR" id="B3QUP6"/>
<dbReference type="STRING" id="517418.Ctha_0481"/>
<dbReference type="KEGG" id="cts:Ctha_0481"/>
<dbReference type="eggNOG" id="COG0055">
    <property type="taxonomic scope" value="Bacteria"/>
</dbReference>
<dbReference type="HOGENOM" id="CLU_022398_0_2_10"/>
<dbReference type="OrthoDB" id="9801639at2"/>
<dbReference type="Proteomes" id="UP000001208">
    <property type="component" value="Chromosome"/>
</dbReference>
<dbReference type="GO" id="GO:0005886">
    <property type="term" value="C:plasma membrane"/>
    <property type="evidence" value="ECO:0007669"/>
    <property type="project" value="UniProtKB-SubCell"/>
</dbReference>
<dbReference type="GO" id="GO:0045259">
    <property type="term" value="C:proton-transporting ATP synthase complex"/>
    <property type="evidence" value="ECO:0007669"/>
    <property type="project" value="UniProtKB-KW"/>
</dbReference>
<dbReference type="GO" id="GO:0005524">
    <property type="term" value="F:ATP binding"/>
    <property type="evidence" value="ECO:0007669"/>
    <property type="project" value="UniProtKB-UniRule"/>
</dbReference>
<dbReference type="GO" id="GO:0016887">
    <property type="term" value="F:ATP hydrolysis activity"/>
    <property type="evidence" value="ECO:0007669"/>
    <property type="project" value="InterPro"/>
</dbReference>
<dbReference type="GO" id="GO:0046933">
    <property type="term" value="F:proton-transporting ATP synthase activity, rotational mechanism"/>
    <property type="evidence" value="ECO:0007669"/>
    <property type="project" value="UniProtKB-UniRule"/>
</dbReference>
<dbReference type="CDD" id="cd18110">
    <property type="entry name" value="ATP-synt_F1_beta_C"/>
    <property type="match status" value="1"/>
</dbReference>
<dbReference type="CDD" id="cd18115">
    <property type="entry name" value="ATP-synt_F1_beta_N"/>
    <property type="match status" value="1"/>
</dbReference>
<dbReference type="CDD" id="cd01133">
    <property type="entry name" value="F1-ATPase_beta_CD"/>
    <property type="match status" value="1"/>
</dbReference>
<dbReference type="FunFam" id="1.10.1140.10:FF:000001">
    <property type="entry name" value="ATP synthase subunit beta"/>
    <property type="match status" value="1"/>
</dbReference>
<dbReference type="FunFam" id="3.40.50.300:FF:000004">
    <property type="entry name" value="ATP synthase subunit beta"/>
    <property type="match status" value="1"/>
</dbReference>
<dbReference type="Gene3D" id="2.40.10.170">
    <property type="match status" value="1"/>
</dbReference>
<dbReference type="Gene3D" id="1.10.1140.10">
    <property type="entry name" value="Bovine Mitochondrial F1-atpase, Atp Synthase Beta Chain, Chain D, domain 3"/>
    <property type="match status" value="1"/>
</dbReference>
<dbReference type="Gene3D" id="3.40.50.300">
    <property type="entry name" value="P-loop containing nucleotide triphosphate hydrolases"/>
    <property type="match status" value="1"/>
</dbReference>
<dbReference type="HAMAP" id="MF_01347">
    <property type="entry name" value="ATP_synth_beta_bact"/>
    <property type="match status" value="1"/>
</dbReference>
<dbReference type="InterPro" id="IPR003593">
    <property type="entry name" value="AAA+_ATPase"/>
</dbReference>
<dbReference type="InterPro" id="IPR055190">
    <property type="entry name" value="ATP-synt_VA_C"/>
</dbReference>
<dbReference type="InterPro" id="IPR005722">
    <property type="entry name" value="ATP_synth_F1_bsu"/>
</dbReference>
<dbReference type="InterPro" id="IPR020003">
    <property type="entry name" value="ATPase_a/bsu_AS"/>
</dbReference>
<dbReference type="InterPro" id="IPR050053">
    <property type="entry name" value="ATPase_alpha/beta_chains"/>
</dbReference>
<dbReference type="InterPro" id="IPR004100">
    <property type="entry name" value="ATPase_F1/V1/A1_a/bsu_N"/>
</dbReference>
<dbReference type="InterPro" id="IPR036121">
    <property type="entry name" value="ATPase_F1/V1/A1_a/bsu_N_sf"/>
</dbReference>
<dbReference type="InterPro" id="IPR000194">
    <property type="entry name" value="ATPase_F1/V1/A1_a/bsu_nucl-bd"/>
</dbReference>
<dbReference type="InterPro" id="IPR024034">
    <property type="entry name" value="ATPase_F1/V1_b/a_C"/>
</dbReference>
<dbReference type="InterPro" id="IPR027417">
    <property type="entry name" value="P-loop_NTPase"/>
</dbReference>
<dbReference type="NCBIfam" id="TIGR01039">
    <property type="entry name" value="atpD"/>
    <property type="match status" value="1"/>
</dbReference>
<dbReference type="PANTHER" id="PTHR15184">
    <property type="entry name" value="ATP SYNTHASE"/>
    <property type="match status" value="1"/>
</dbReference>
<dbReference type="PANTHER" id="PTHR15184:SF71">
    <property type="entry name" value="ATP SYNTHASE SUBUNIT BETA, MITOCHONDRIAL"/>
    <property type="match status" value="1"/>
</dbReference>
<dbReference type="Pfam" id="PF00006">
    <property type="entry name" value="ATP-synt_ab"/>
    <property type="match status" value="1"/>
</dbReference>
<dbReference type="Pfam" id="PF02874">
    <property type="entry name" value="ATP-synt_ab_N"/>
    <property type="match status" value="1"/>
</dbReference>
<dbReference type="Pfam" id="PF22919">
    <property type="entry name" value="ATP-synt_VA_C"/>
    <property type="match status" value="1"/>
</dbReference>
<dbReference type="SMART" id="SM00382">
    <property type="entry name" value="AAA"/>
    <property type="match status" value="1"/>
</dbReference>
<dbReference type="SUPFAM" id="SSF47917">
    <property type="entry name" value="C-terminal domain of alpha and beta subunits of F1 ATP synthase"/>
    <property type="match status" value="1"/>
</dbReference>
<dbReference type="SUPFAM" id="SSF50615">
    <property type="entry name" value="N-terminal domain of alpha and beta subunits of F1 ATP synthase"/>
    <property type="match status" value="1"/>
</dbReference>
<dbReference type="SUPFAM" id="SSF52540">
    <property type="entry name" value="P-loop containing nucleoside triphosphate hydrolases"/>
    <property type="match status" value="1"/>
</dbReference>
<dbReference type="PROSITE" id="PS00152">
    <property type="entry name" value="ATPASE_ALPHA_BETA"/>
    <property type="match status" value="1"/>
</dbReference>